<sequence>MPRSLKKGPFVDEKLENKIVIARNTKSSHIIKTWSRRSTVTPEMVGLTFAVHNGKKFIPVFVTENMVGHKLGEFSPTRTFYGHAGSKKSKVR</sequence>
<dbReference type="EMBL" id="CP000859">
    <property type="protein sequence ID" value="ABW66522.1"/>
    <property type="molecule type" value="Genomic_DNA"/>
</dbReference>
<dbReference type="RefSeq" id="WP_012174140.1">
    <property type="nucleotide sequence ID" value="NC_009943.1"/>
</dbReference>
<dbReference type="SMR" id="A8ZV61"/>
<dbReference type="STRING" id="96561.Dole_0712"/>
<dbReference type="KEGG" id="dol:Dole_0712"/>
<dbReference type="eggNOG" id="COG0185">
    <property type="taxonomic scope" value="Bacteria"/>
</dbReference>
<dbReference type="HOGENOM" id="CLU_144911_0_1_7"/>
<dbReference type="OrthoDB" id="9797833at2"/>
<dbReference type="Proteomes" id="UP000008561">
    <property type="component" value="Chromosome"/>
</dbReference>
<dbReference type="GO" id="GO:0005737">
    <property type="term" value="C:cytoplasm"/>
    <property type="evidence" value="ECO:0007669"/>
    <property type="project" value="UniProtKB-ARBA"/>
</dbReference>
<dbReference type="GO" id="GO:0015935">
    <property type="term" value="C:small ribosomal subunit"/>
    <property type="evidence" value="ECO:0007669"/>
    <property type="project" value="InterPro"/>
</dbReference>
<dbReference type="GO" id="GO:0019843">
    <property type="term" value="F:rRNA binding"/>
    <property type="evidence" value="ECO:0007669"/>
    <property type="project" value="UniProtKB-UniRule"/>
</dbReference>
<dbReference type="GO" id="GO:0003735">
    <property type="term" value="F:structural constituent of ribosome"/>
    <property type="evidence" value="ECO:0007669"/>
    <property type="project" value="InterPro"/>
</dbReference>
<dbReference type="GO" id="GO:0000028">
    <property type="term" value="P:ribosomal small subunit assembly"/>
    <property type="evidence" value="ECO:0007669"/>
    <property type="project" value="TreeGrafter"/>
</dbReference>
<dbReference type="GO" id="GO:0006412">
    <property type="term" value="P:translation"/>
    <property type="evidence" value="ECO:0007669"/>
    <property type="project" value="UniProtKB-UniRule"/>
</dbReference>
<dbReference type="FunFam" id="3.30.860.10:FF:000001">
    <property type="entry name" value="30S ribosomal protein S19"/>
    <property type="match status" value="1"/>
</dbReference>
<dbReference type="Gene3D" id="3.30.860.10">
    <property type="entry name" value="30s Ribosomal Protein S19, Chain A"/>
    <property type="match status" value="1"/>
</dbReference>
<dbReference type="HAMAP" id="MF_00531">
    <property type="entry name" value="Ribosomal_uS19"/>
    <property type="match status" value="1"/>
</dbReference>
<dbReference type="InterPro" id="IPR002222">
    <property type="entry name" value="Ribosomal_uS19"/>
</dbReference>
<dbReference type="InterPro" id="IPR005732">
    <property type="entry name" value="Ribosomal_uS19_bac-type"/>
</dbReference>
<dbReference type="InterPro" id="IPR020934">
    <property type="entry name" value="Ribosomal_uS19_CS"/>
</dbReference>
<dbReference type="InterPro" id="IPR023575">
    <property type="entry name" value="Ribosomal_uS19_SF"/>
</dbReference>
<dbReference type="NCBIfam" id="TIGR01050">
    <property type="entry name" value="rpsS_bact"/>
    <property type="match status" value="1"/>
</dbReference>
<dbReference type="PANTHER" id="PTHR11880">
    <property type="entry name" value="RIBOSOMAL PROTEIN S19P FAMILY MEMBER"/>
    <property type="match status" value="1"/>
</dbReference>
<dbReference type="PANTHER" id="PTHR11880:SF8">
    <property type="entry name" value="SMALL RIBOSOMAL SUBUNIT PROTEIN US19M"/>
    <property type="match status" value="1"/>
</dbReference>
<dbReference type="Pfam" id="PF00203">
    <property type="entry name" value="Ribosomal_S19"/>
    <property type="match status" value="1"/>
</dbReference>
<dbReference type="PIRSF" id="PIRSF002144">
    <property type="entry name" value="Ribosomal_S19"/>
    <property type="match status" value="1"/>
</dbReference>
<dbReference type="PRINTS" id="PR00975">
    <property type="entry name" value="RIBOSOMALS19"/>
</dbReference>
<dbReference type="SUPFAM" id="SSF54570">
    <property type="entry name" value="Ribosomal protein S19"/>
    <property type="match status" value="1"/>
</dbReference>
<dbReference type="PROSITE" id="PS00323">
    <property type="entry name" value="RIBOSOMAL_S19"/>
    <property type="match status" value="1"/>
</dbReference>
<gene>
    <name evidence="1" type="primary">rpsS</name>
    <name type="ordered locus">Dole_0712</name>
</gene>
<proteinExistence type="inferred from homology"/>
<comment type="function">
    <text evidence="1">Protein S19 forms a complex with S13 that binds strongly to the 16S ribosomal RNA.</text>
</comment>
<comment type="similarity">
    <text evidence="1">Belongs to the universal ribosomal protein uS19 family.</text>
</comment>
<feature type="chain" id="PRO_1000127964" description="Small ribosomal subunit protein uS19">
    <location>
        <begin position="1"/>
        <end position="92"/>
    </location>
</feature>
<keyword id="KW-1185">Reference proteome</keyword>
<keyword id="KW-0687">Ribonucleoprotein</keyword>
<keyword id="KW-0689">Ribosomal protein</keyword>
<keyword id="KW-0694">RNA-binding</keyword>
<keyword id="KW-0699">rRNA-binding</keyword>
<name>RS19_DESOH</name>
<reference key="1">
    <citation type="submission" date="2007-10" db="EMBL/GenBank/DDBJ databases">
        <title>Complete sequence of Desulfococcus oleovorans Hxd3.</title>
        <authorList>
            <consortium name="US DOE Joint Genome Institute"/>
            <person name="Copeland A."/>
            <person name="Lucas S."/>
            <person name="Lapidus A."/>
            <person name="Barry K."/>
            <person name="Glavina del Rio T."/>
            <person name="Dalin E."/>
            <person name="Tice H."/>
            <person name="Pitluck S."/>
            <person name="Kiss H."/>
            <person name="Brettin T."/>
            <person name="Bruce D."/>
            <person name="Detter J.C."/>
            <person name="Han C."/>
            <person name="Schmutz J."/>
            <person name="Larimer F."/>
            <person name="Land M."/>
            <person name="Hauser L."/>
            <person name="Kyrpides N."/>
            <person name="Kim E."/>
            <person name="Wawrik B."/>
            <person name="Richardson P."/>
        </authorList>
    </citation>
    <scope>NUCLEOTIDE SEQUENCE [LARGE SCALE GENOMIC DNA]</scope>
    <source>
        <strain>DSM 6200 / JCM 39069 / Hxd3</strain>
    </source>
</reference>
<evidence type="ECO:0000255" key="1">
    <source>
        <dbReference type="HAMAP-Rule" id="MF_00531"/>
    </source>
</evidence>
<evidence type="ECO:0000305" key="2"/>
<organism>
    <name type="scientific">Desulfosudis oleivorans (strain DSM 6200 / JCM 39069 / Hxd3)</name>
    <name type="common">Desulfococcus oleovorans</name>
    <dbReference type="NCBI Taxonomy" id="96561"/>
    <lineage>
        <taxon>Bacteria</taxon>
        <taxon>Pseudomonadati</taxon>
        <taxon>Thermodesulfobacteriota</taxon>
        <taxon>Desulfobacteria</taxon>
        <taxon>Desulfobacterales</taxon>
        <taxon>Desulfosudaceae</taxon>
        <taxon>Desulfosudis</taxon>
    </lineage>
</organism>
<protein>
    <recommendedName>
        <fullName evidence="1">Small ribosomal subunit protein uS19</fullName>
    </recommendedName>
    <alternativeName>
        <fullName evidence="2">30S ribosomal protein S19</fullName>
    </alternativeName>
</protein>
<accession>A8ZV61</accession>